<comment type="function">
    <text evidence="4 7">Polymerizes chitin, a structural polymer of the cell wall and septum, by transferring the sugar moiety of UDP-GlcNAc to the non-reducing end of the growing chitin polymer (Probable). Shows additive effects in septum formation with CHS2, CHS3A, CHS4, CHS5, CHS6 and CHS7 (PubMed:27725723). Regulates mycelial growth and conidiation (PubMed:27725723). Involved in virulence and mediates mycotoxin deoxinivalenol (DON) biosynthesis via the regulation of the expression of TRI4, TRI5 and TRI6 (PubMed:27725723).</text>
</comment>
<comment type="catalytic activity">
    <reaction evidence="7">
        <text>[(1-&gt;4)-N-acetyl-beta-D-glucosaminyl](n) + UDP-N-acetyl-alpha-D-glucosamine = [(1-&gt;4)-N-acetyl-beta-D-glucosaminyl](n+1) + UDP + H(+)</text>
        <dbReference type="Rhea" id="RHEA:16637"/>
        <dbReference type="Rhea" id="RHEA-COMP:9593"/>
        <dbReference type="Rhea" id="RHEA-COMP:9595"/>
        <dbReference type="ChEBI" id="CHEBI:15378"/>
        <dbReference type="ChEBI" id="CHEBI:17029"/>
        <dbReference type="ChEBI" id="CHEBI:57705"/>
        <dbReference type="ChEBI" id="CHEBI:58223"/>
        <dbReference type="EC" id="2.4.1.16"/>
    </reaction>
    <physiologicalReaction direction="left-to-right" evidence="7">
        <dbReference type="Rhea" id="RHEA:16638"/>
    </physiologicalReaction>
</comment>
<comment type="subcellular location">
    <subcellularLocation>
        <location evidence="6">Cell membrane</location>
        <topology evidence="1">Multi-pass membrane protein</topology>
    </subcellularLocation>
</comment>
<comment type="induction">
    <text evidence="4">Exhibits lower expression levels in hyphae than in germinating conidia (PubMed:27725723). Expression is increased in the absence of chitin synthase CHS2 (PubMed:27725723).</text>
</comment>
<comment type="similarity">
    <text evidence="6">Belongs to the chitin synthase family. Class I subfamily.</text>
</comment>
<protein>
    <recommendedName>
        <fullName evidence="5">Chitin synthase 1</fullName>
        <ecNumber evidence="7">2.4.1.16</ecNumber>
    </recommendedName>
    <alternativeName>
        <fullName evidence="6">Chitin-UDP acetyl-glucosaminyl transferase 1</fullName>
    </alternativeName>
    <alternativeName>
        <fullName evidence="5">Class-I chitin synthase 1</fullName>
    </alternativeName>
</protein>
<proteinExistence type="evidence at transcript level"/>
<feature type="chain" id="PRO_0000460792" description="Chitin synthase 1">
    <location>
        <begin position="1"/>
        <end position="898"/>
    </location>
</feature>
<feature type="transmembrane region" description="Helical" evidence="1">
    <location>
        <begin position="441"/>
        <end position="461"/>
    </location>
</feature>
<feature type="transmembrane region" description="Helical" evidence="1">
    <location>
        <begin position="540"/>
        <end position="560"/>
    </location>
</feature>
<feature type="transmembrane region" description="Helical" evidence="1">
    <location>
        <begin position="570"/>
        <end position="590"/>
    </location>
</feature>
<feature type="transmembrane region" description="Helical" evidence="1">
    <location>
        <begin position="616"/>
        <end position="636"/>
    </location>
</feature>
<feature type="transmembrane region" description="Helical" evidence="1">
    <location>
        <begin position="651"/>
        <end position="671"/>
    </location>
</feature>
<feature type="transmembrane region" description="Helical" evidence="1">
    <location>
        <begin position="697"/>
        <end position="717"/>
    </location>
</feature>
<feature type="transmembrane region" description="Helical" evidence="1">
    <location>
        <begin position="726"/>
        <end position="746"/>
    </location>
</feature>
<feature type="transmembrane region" description="Helical" evidence="1">
    <location>
        <begin position="825"/>
        <end position="845"/>
    </location>
</feature>
<feature type="transmembrane region" description="Helical" evidence="1">
    <location>
        <begin position="870"/>
        <end position="890"/>
    </location>
</feature>
<feature type="region of interest" description="Disordered" evidence="3">
    <location>
        <begin position="1"/>
        <end position="154"/>
    </location>
</feature>
<feature type="compositionally biased region" description="Pro residues" evidence="3">
    <location>
        <begin position="9"/>
        <end position="21"/>
    </location>
</feature>
<feature type="compositionally biased region" description="Polar residues" evidence="3">
    <location>
        <begin position="64"/>
        <end position="75"/>
    </location>
</feature>
<feature type="compositionally biased region" description="Polar residues" evidence="3">
    <location>
        <begin position="136"/>
        <end position="146"/>
    </location>
</feature>
<feature type="glycosylation site" description="N-linked (GlcNAc...) asparagine" evidence="2">
    <location>
        <position position="685"/>
    </location>
</feature>
<name>CHS1_GIBZE</name>
<dbReference type="EC" id="2.4.1.16" evidence="7"/>
<dbReference type="EMBL" id="HG970332">
    <property type="status" value="NOT_ANNOTATED_CDS"/>
    <property type="molecule type" value="Genomic_DNA"/>
</dbReference>
<dbReference type="RefSeq" id="XP_011319287.1">
    <property type="nucleotide sequence ID" value="XM_011320985.1"/>
</dbReference>
<dbReference type="SMR" id="I1S0T9"/>
<dbReference type="KEGG" id="fgr:FGSG_10327"/>
<dbReference type="HOGENOM" id="CLU_004760_3_1_1"/>
<dbReference type="OrthoDB" id="40446at110618"/>
<dbReference type="Proteomes" id="UP000070720">
    <property type="component" value="Chromosome 1"/>
</dbReference>
<dbReference type="GO" id="GO:0030428">
    <property type="term" value="C:cell septum"/>
    <property type="evidence" value="ECO:0007669"/>
    <property type="project" value="TreeGrafter"/>
</dbReference>
<dbReference type="GO" id="GO:0005886">
    <property type="term" value="C:plasma membrane"/>
    <property type="evidence" value="ECO:0007669"/>
    <property type="project" value="UniProtKB-SubCell"/>
</dbReference>
<dbReference type="GO" id="GO:0004100">
    <property type="term" value="F:chitin synthase activity"/>
    <property type="evidence" value="ECO:0007669"/>
    <property type="project" value="UniProtKB-EC"/>
</dbReference>
<dbReference type="GO" id="GO:0071555">
    <property type="term" value="P:cell wall organization"/>
    <property type="evidence" value="ECO:0007669"/>
    <property type="project" value="UniProtKB-KW"/>
</dbReference>
<dbReference type="GO" id="GO:0006031">
    <property type="term" value="P:chitin biosynthetic process"/>
    <property type="evidence" value="ECO:0007669"/>
    <property type="project" value="InterPro"/>
</dbReference>
<dbReference type="CDD" id="cd04190">
    <property type="entry name" value="Chitin_synth_C"/>
    <property type="match status" value="1"/>
</dbReference>
<dbReference type="InterPro" id="IPR004835">
    <property type="entry name" value="Chitin_synth"/>
</dbReference>
<dbReference type="InterPro" id="IPR004834">
    <property type="entry name" value="Chitin_synth_fun"/>
</dbReference>
<dbReference type="InterPro" id="IPR013616">
    <property type="entry name" value="Chitin_synth_N"/>
</dbReference>
<dbReference type="PANTHER" id="PTHR22914">
    <property type="entry name" value="CHITIN SYNTHASE"/>
    <property type="match status" value="1"/>
</dbReference>
<dbReference type="PANTHER" id="PTHR22914:SF9">
    <property type="entry name" value="CHITIN SYNTHASE 1"/>
    <property type="match status" value="1"/>
</dbReference>
<dbReference type="Pfam" id="PF01644">
    <property type="entry name" value="Chitin_synth_1"/>
    <property type="match status" value="1"/>
</dbReference>
<dbReference type="Pfam" id="PF08407">
    <property type="entry name" value="Chitin_synth_1N"/>
    <property type="match status" value="1"/>
</dbReference>
<keyword id="KW-1003">Cell membrane</keyword>
<keyword id="KW-0961">Cell wall biogenesis/degradation</keyword>
<keyword id="KW-0325">Glycoprotein</keyword>
<keyword id="KW-0328">Glycosyltransferase</keyword>
<keyword id="KW-0472">Membrane</keyword>
<keyword id="KW-1185">Reference proteome</keyword>
<keyword id="KW-0808">Transferase</keyword>
<keyword id="KW-0812">Transmembrane</keyword>
<keyword id="KW-1133">Transmembrane helix</keyword>
<keyword id="KW-0843">Virulence</keyword>
<sequence length="898" mass="101840">MDPRYGAQPMPPRRSPSPGHPVQPGYQLDDNPFDDGRYGQYGPSSQHLAMPGHDPHGRLPTPSDHLSLNAAQSVDNLAGYGPPSGGDYAINPEAHHDAYYNQPYEPRPQHQGYDQGYEQDYDVPDNRPMLPHQHSDVPSEQYQDPPQQGGGIQRRKTVKQFALYRGNLVFDCRVPPLLLQQNPHGERDEFTHMRYSAATCDPNDFHDHDFTLRQRLFSKPRHTELFIVVTMYNEDEILFARTMTGVFKNIEYMCNRPNSKTWGKDAWKKIVVCVVSDGRSKINPRTRALLAGMGVYQEGIAKQHVNDKAVTAHIYEYTTQTHLQIKNNVVQLVHRRQPVQMLFCLKEKNAKKINSHRWFFNAFGRVLDPNICVLLDAGTRPGGSSIYHLWKAFDLEPMCGGACGEIKAMLGTGGRYLLNPLVAAQNFEYKMSNILDKPLESAFGFISVLPGAFSAYRYVALQNDKNGKGPLEKYFLGETLHGGSEAGLFESNMYLAEDRILCFELVTKRNCHWILQYVKSATGETDVPDTVTELVLQRRRWLNGSFFAAIYAIVHFLDFLRSDHTFLRKFAFFIEFIFNTINMIFAWFAIGNFFLVFKILTTSLGDDTLLGRTGEILGVVFTWLYGVFLITCFVLSLGNRPAGSGRLYTAMCWFWAIIMIYLMFAAVFISVKAIIADVNDENGFNISDIFKNKVFYMLIISLMSTYGIWLIASLIMLDPWHMVTSFAQYMLLTPTFTNVLNVYAFCNTHDVSWGTKGDDKVEELPSVNTKDGTGKTDLPDEGDLDAQYQREVAVFAQKFVEVKSAPTPSQLQERQMDYYRGVRTGVVLLWMVTNFGLAAIVLSSAGLDRISTKEDKEAEQLSRSNIYMSIVLWSVAGLSAFKFIGAMWFLVVRMFRGV</sequence>
<accession>I1S0T9</accession>
<gene>
    <name evidence="5" type="primary">CHS1</name>
    <name type="ORF">FG10327</name>
</gene>
<reference key="1">
    <citation type="journal article" date="2007" name="Science">
        <title>The Fusarium graminearum genome reveals a link between localized polymorphism and pathogen specialization.</title>
        <authorList>
            <person name="Cuomo C.A."/>
            <person name="Gueldener U."/>
            <person name="Xu J.-R."/>
            <person name="Trail F."/>
            <person name="Turgeon B.G."/>
            <person name="Di Pietro A."/>
            <person name="Walton J.D."/>
            <person name="Ma L.-J."/>
            <person name="Baker S.E."/>
            <person name="Rep M."/>
            <person name="Adam G."/>
            <person name="Antoniw J."/>
            <person name="Baldwin T."/>
            <person name="Calvo S.E."/>
            <person name="Chang Y.-L."/>
            <person name="DeCaprio D."/>
            <person name="Gale L.R."/>
            <person name="Gnerre S."/>
            <person name="Goswami R.S."/>
            <person name="Hammond-Kosack K."/>
            <person name="Harris L.J."/>
            <person name="Hilburn K."/>
            <person name="Kennell J.C."/>
            <person name="Kroken S."/>
            <person name="Magnuson J.K."/>
            <person name="Mannhaupt G."/>
            <person name="Mauceli E.W."/>
            <person name="Mewes H.-W."/>
            <person name="Mitterbauer R."/>
            <person name="Muehlbauer G."/>
            <person name="Muensterkoetter M."/>
            <person name="Nelson D."/>
            <person name="O'Donnell K."/>
            <person name="Ouellet T."/>
            <person name="Qi W."/>
            <person name="Quesneville H."/>
            <person name="Roncero M.I.G."/>
            <person name="Seong K.-Y."/>
            <person name="Tetko I.V."/>
            <person name="Urban M."/>
            <person name="Waalwijk C."/>
            <person name="Ward T.J."/>
            <person name="Yao J."/>
            <person name="Birren B.W."/>
            <person name="Kistler H.C."/>
        </authorList>
    </citation>
    <scope>NUCLEOTIDE SEQUENCE [LARGE SCALE GENOMIC DNA]</scope>
    <source>
        <strain>ATCC MYA-4620 / CBS 123657 / FGSC 9075 / NRRL 31084 / PH-1</strain>
    </source>
</reference>
<reference key="2">
    <citation type="journal article" date="2010" name="Nature">
        <title>Comparative genomics reveals mobile pathogenicity chromosomes in Fusarium.</title>
        <authorList>
            <person name="Ma L.-J."/>
            <person name="van der Does H.C."/>
            <person name="Borkovich K.A."/>
            <person name="Coleman J.J."/>
            <person name="Daboussi M.-J."/>
            <person name="Di Pietro A."/>
            <person name="Dufresne M."/>
            <person name="Freitag M."/>
            <person name="Grabherr M."/>
            <person name="Henrissat B."/>
            <person name="Houterman P.M."/>
            <person name="Kang S."/>
            <person name="Shim W.-B."/>
            <person name="Woloshuk C."/>
            <person name="Xie X."/>
            <person name="Xu J.-R."/>
            <person name="Antoniw J."/>
            <person name="Baker S.E."/>
            <person name="Bluhm B.H."/>
            <person name="Breakspear A."/>
            <person name="Brown D.W."/>
            <person name="Butchko R.A.E."/>
            <person name="Chapman S."/>
            <person name="Coulson R."/>
            <person name="Coutinho P.M."/>
            <person name="Danchin E.G.J."/>
            <person name="Diener A."/>
            <person name="Gale L.R."/>
            <person name="Gardiner D.M."/>
            <person name="Goff S."/>
            <person name="Hammond-Kosack K.E."/>
            <person name="Hilburn K."/>
            <person name="Hua-Van A."/>
            <person name="Jonkers W."/>
            <person name="Kazan K."/>
            <person name="Kodira C.D."/>
            <person name="Koehrsen M."/>
            <person name="Kumar L."/>
            <person name="Lee Y.-H."/>
            <person name="Li L."/>
            <person name="Manners J.M."/>
            <person name="Miranda-Saavedra D."/>
            <person name="Mukherjee M."/>
            <person name="Park G."/>
            <person name="Park J."/>
            <person name="Park S.-Y."/>
            <person name="Proctor R.H."/>
            <person name="Regev A."/>
            <person name="Ruiz-Roldan M.C."/>
            <person name="Sain D."/>
            <person name="Sakthikumar S."/>
            <person name="Sykes S."/>
            <person name="Schwartz D.C."/>
            <person name="Turgeon B.G."/>
            <person name="Wapinski I."/>
            <person name="Yoder O."/>
            <person name="Young S."/>
            <person name="Zeng Q."/>
            <person name="Zhou S."/>
            <person name="Galagan J."/>
            <person name="Cuomo C.A."/>
            <person name="Kistler H.C."/>
            <person name="Rep M."/>
        </authorList>
    </citation>
    <scope>GENOME REANNOTATION</scope>
    <source>
        <strain>ATCC MYA-4620 / CBS 123657 / FGSC 9075 / NRRL 31084 / PH-1</strain>
    </source>
</reference>
<reference key="3">
    <citation type="journal article" date="2015" name="BMC Genomics">
        <title>The completed genome sequence of the pathogenic ascomycete fungus Fusarium graminearum.</title>
        <authorList>
            <person name="King R."/>
            <person name="Urban M."/>
            <person name="Hammond-Kosack M.C.U."/>
            <person name="Hassani-Pak K."/>
            <person name="Hammond-Kosack K.E."/>
        </authorList>
    </citation>
    <scope>NUCLEOTIDE SEQUENCE [LARGE SCALE GENOMIC DNA]</scope>
    <source>
        <strain>ATCC MYA-4620 / CBS 123657 / FGSC 9075 / NRRL 31084 / PH-1</strain>
    </source>
</reference>
<reference key="4">
    <citation type="journal article" date="2016" name="Sci. Rep.">
        <title>The chitin synthase FgChs2 and other FgChss co-regulate vegetative development and virulence in F. graminearum.</title>
        <authorList>
            <person name="Liu Z."/>
            <person name="Zhang X."/>
            <person name="Liu X."/>
            <person name="Fu C."/>
            <person name="Han X."/>
            <person name="Yin Y."/>
            <person name="Ma Z."/>
        </authorList>
    </citation>
    <scope>FUNCTION</scope>
    <scope>INDUCTION</scope>
</reference>
<evidence type="ECO:0000255" key="1"/>
<evidence type="ECO:0000255" key="2">
    <source>
        <dbReference type="PROSITE-ProRule" id="PRU00498"/>
    </source>
</evidence>
<evidence type="ECO:0000256" key="3">
    <source>
        <dbReference type="SAM" id="MobiDB-lite"/>
    </source>
</evidence>
<evidence type="ECO:0000269" key="4">
    <source>
    </source>
</evidence>
<evidence type="ECO:0000303" key="5">
    <source>
    </source>
</evidence>
<evidence type="ECO:0000305" key="6"/>
<evidence type="ECO:0000305" key="7">
    <source>
    </source>
</evidence>
<organism>
    <name type="scientific">Gibberella zeae (strain ATCC MYA-4620 / CBS 123657 / FGSC 9075 / NRRL 31084 / PH-1)</name>
    <name type="common">Wheat head blight fungus</name>
    <name type="synonym">Fusarium graminearum</name>
    <dbReference type="NCBI Taxonomy" id="229533"/>
    <lineage>
        <taxon>Eukaryota</taxon>
        <taxon>Fungi</taxon>
        <taxon>Dikarya</taxon>
        <taxon>Ascomycota</taxon>
        <taxon>Pezizomycotina</taxon>
        <taxon>Sordariomycetes</taxon>
        <taxon>Hypocreomycetidae</taxon>
        <taxon>Hypocreales</taxon>
        <taxon>Nectriaceae</taxon>
        <taxon>Fusarium</taxon>
    </lineage>
</organism>